<feature type="chain" id="PRO_0000207163" description="Cystatin-like protein">
    <location>
        <begin position="1"/>
        <end position="126"/>
    </location>
</feature>
<feature type="short sequence motif" description="Secondary area of contact" evidence="1">
    <location>
        <begin position="72"/>
        <end position="76"/>
    </location>
</feature>
<feature type="site" description="Reactive site" evidence="1">
    <location>
        <position position="29"/>
    </location>
</feature>
<feature type="disulfide bond" evidence="1">
    <location>
        <begin position="94"/>
        <end position="115"/>
    </location>
</feature>
<feature type="sequence conflict" description="In Ref. 4; AAL48106." evidence="2" ref="4">
    <original>P</original>
    <variation>H</variation>
    <location>
        <position position="59"/>
    </location>
</feature>
<reference key="1">
    <citation type="journal article" date="1990" name="FEBS Lett.">
        <title>Sequence analysis, and chromosomal localization of a gene encoding a cystatin-like protein from Drosophila melanogaster.</title>
        <authorList>
            <person name="Delbridge M.L."/>
            <person name="Kelly L.E."/>
        </authorList>
    </citation>
    <scope>NUCLEOTIDE SEQUENCE [GENOMIC DNA]</scope>
</reference>
<reference key="2">
    <citation type="journal article" date="2000" name="Science">
        <title>The genome sequence of Drosophila melanogaster.</title>
        <authorList>
            <person name="Adams M.D."/>
            <person name="Celniker S.E."/>
            <person name="Holt R.A."/>
            <person name="Evans C.A."/>
            <person name="Gocayne J.D."/>
            <person name="Amanatides P.G."/>
            <person name="Scherer S.E."/>
            <person name="Li P.W."/>
            <person name="Hoskins R.A."/>
            <person name="Galle R.F."/>
            <person name="George R.A."/>
            <person name="Lewis S.E."/>
            <person name="Richards S."/>
            <person name="Ashburner M."/>
            <person name="Henderson S.N."/>
            <person name="Sutton G.G."/>
            <person name="Wortman J.R."/>
            <person name="Yandell M.D."/>
            <person name="Zhang Q."/>
            <person name="Chen L.X."/>
            <person name="Brandon R.C."/>
            <person name="Rogers Y.-H.C."/>
            <person name="Blazej R.G."/>
            <person name="Champe M."/>
            <person name="Pfeiffer B.D."/>
            <person name="Wan K.H."/>
            <person name="Doyle C."/>
            <person name="Baxter E.G."/>
            <person name="Helt G."/>
            <person name="Nelson C.R."/>
            <person name="Miklos G.L.G."/>
            <person name="Abril J.F."/>
            <person name="Agbayani A."/>
            <person name="An H.-J."/>
            <person name="Andrews-Pfannkoch C."/>
            <person name="Baldwin D."/>
            <person name="Ballew R.M."/>
            <person name="Basu A."/>
            <person name="Baxendale J."/>
            <person name="Bayraktaroglu L."/>
            <person name="Beasley E.M."/>
            <person name="Beeson K.Y."/>
            <person name="Benos P.V."/>
            <person name="Berman B.P."/>
            <person name="Bhandari D."/>
            <person name="Bolshakov S."/>
            <person name="Borkova D."/>
            <person name="Botchan M.R."/>
            <person name="Bouck J."/>
            <person name="Brokstein P."/>
            <person name="Brottier P."/>
            <person name="Burtis K.C."/>
            <person name="Busam D.A."/>
            <person name="Butler H."/>
            <person name="Cadieu E."/>
            <person name="Center A."/>
            <person name="Chandra I."/>
            <person name="Cherry J.M."/>
            <person name="Cawley S."/>
            <person name="Dahlke C."/>
            <person name="Davenport L.B."/>
            <person name="Davies P."/>
            <person name="de Pablos B."/>
            <person name="Delcher A."/>
            <person name="Deng Z."/>
            <person name="Mays A.D."/>
            <person name="Dew I."/>
            <person name="Dietz S.M."/>
            <person name="Dodson K."/>
            <person name="Doup L.E."/>
            <person name="Downes M."/>
            <person name="Dugan-Rocha S."/>
            <person name="Dunkov B.C."/>
            <person name="Dunn P."/>
            <person name="Durbin K.J."/>
            <person name="Evangelista C.C."/>
            <person name="Ferraz C."/>
            <person name="Ferriera S."/>
            <person name="Fleischmann W."/>
            <person name="Fosler C."/>
            <person name="Gabrielian A.E."/>
            <person name="Garg N.S."/>
            <person name="Gelbart W.M."/>
            <person name="Glasser K."/>
            <person name="Glodek A."/>
            <person name="Gong F."/>
            <person name="Gorrell J.H."/>
            <person name="Gu Z."/>
            <person name="Guan P."/>
            <person name="Harris M."/>
            <person name="Harris N.L."/>
            <person name="Harvey D.A."/>
            <person name="Heiman T.J."/>
            <person name="Hernandez J.R."/>
            <person name="Houck J."/>
            <person name="Hostin D."/>
            <person name="Houston K.A."/>
            <person name="Howland T.J."/>
            <person name="Wei M.-H."/>
            <person name="Ibegwam C."/>
            <person name="Jalali M."/>
            <person name="Kalush F."/>
            <person name="Karpen G.H."/>
            <person name="Ke Z."/>
            <person name="Kennison J.A."/>
            <person name="Ketchum K.A."/>
            <person name="Kimmel B.E."/>
            <person name="Kodira C.D."/>
            <person name="Kraft C.L."/>
            <person name="Kravitz S."/>
            <person name="Kulp D."/>
            <person name="Lai Z."/>
            <person name="Lasko P."/>
            <person name="Lei Y."/>
            <person name="Levitsky A.A."/>
            <person name="Li J.H."/>
            <person name="Li Z."/>
            <person name="Liang Y."/>
            <person name="Lin X."/>
            <person name="Liu X."/>
            <person name="Mattei B."/>
            <person name="McIntosh T.C."/>
            <person name="McLeod M.P."/>
            <person name="McPherson D."/>
            <person name="Merkulov G."/>
            <person name="Milshina N.V."/>
            <person name="Mobarry C."/>
            <person name="Morris J."/>
            <person name="Moshrefi A."/>
            <person name="Mount S.M."/>
            <person name="Moy M."/>
            <person name="Murphy B."/>
            <person name="Murphy L."/>
            <person name="Muzny D.M."/>
            <person name="Nelson D.L."/>
            <person name="Nelson D.R."/>
            <person name="Nelson K.A."/>
            <person name="Nixon K."/>
            <person name="Nusskern D.R."/>
            <person name="Pacleb J.M."/>
            <person name="Palazzolo M."/>
            <person name="Pittman G.S."/>
            <person name="Pan S."/>
            <person name="Pollard J."/>
            <person name="Puri V."/>
            <person name="Reese M.G."/>
            <person name="Reinert K."/>
            <person name="Remington K."/>
            <person name="Saunders R.D.C."/>
            <person name="Scheeler F."/>
            <person name="Shen H."/>
            <person name="Shue B.C."/>
            <person name="Siden-Kiamos I."/>
            <person name="Simpson M."/>
            <person name="Skupski M.P."/>
            <person name="Smith T.J."/>
            <person name="Spier E."/>
            <person name="Spradling A.C."/>
            <person name="Stapleton M."/>
            <person name="Strong R."/>
            <person name="Sun E."/>
            <person name="Svirskas R."/>
            <person name="Tector C."/>
            <person name="Turner R."/>
            <person name="Venter E."/>
            <person name="Wang A.H."/>
            <person name="Wang X."/>
            <person name="Wang Z.-Y."/>
            <person name="Wassarman D.A."/>
            <person name="Weinstock G.M."/>
            <person name="Weissenbach J."/>
            <person name="Williams S.M."/>
            <person name="Woodage T."/>
            <person name="Worley K.C."/>
            <person name="Wu D."/>
            <person name="Yang S."/>
            <person name="Yao Q.A."/>
            <person name="Ye J."/>
            <person name="Yeh R.-F."/>
            <person name="Zaveri J.S."/>
            <person name="Zhan M."/>
            <person name="Zhang G."/>
            <person name="Zhao Q."/>
            <person name="Zheng L."/>
            <person name="Zheng X.H."/>
            <person name="Zhong F.N."/>
            <person name="Zhong W."/>
            <person name="Zhou X."/>
            <person name="Zhu S.C."/>
            <person name="Zhu X."/>
            <person name="Smith H.O."/>
            <person name="Gibbs R.A."/>
            <person name="Myers E.W."/>
            <person name="Rubin G.M."/>
            <person name="Venter J.C."/>
        </authorList>
    </citation>
    <scope>NUCLEOTIDE SEQUENCE [LARGE SCALE GENOMIC DNA]</scope>
    <source>
        <strain>Berkeley</strain>
    </source>
</reference>
<reference key="3">
    <citation type="journal article" date="2002" name="Genome Biol.">
        <title>Annotation of the Drosophila melanogaster euchromatic genome: a systematic review.</title>
        <authorList>
            <person name="Misra S."/>
            <person name="Crosby M.A."/>
            <person name="Mungall C.J."/>
            <person name="Matthews B.B."/>
            <person name="Campbell K.S."/>
            <person name="Hradecky P."/>
            <person name="Huang Y."/>
            <person name="Kaminker J.S."/>
            <person name="Millburn G.H."/>
            <person name="Prochnik S.E."/>
            <person name="Smith C.D."/>
            <person name="Tupy J.L."/>
            <person name="Whitfield E.J."/>
            <person name="Bayraktaroglu L."/>
            <person name="Berman B.P."/>
            <person name="Bettencourt B.R."/>
            <person name="Celniker S.E."/>
            <person name="de Grey A.D.N.J."/>
            <person name="Drysdale R.A."/>
            <person name="Harris N.L."/>
            <person name="Richter J."/>
            <person name="Russo S."/>
            <person name="Schroeder A.J."/>
            <person name="Shu S.Q."/>
            <person name="Stapleton M."/>
            <person name="Yamada C."/>
            <person name="Ashburner M."/>
            <person name="Gelbart W.M."/>
            <person name="Rubin G.M."/>
            <person name="Lewis S.E."/>
        </authorList>
    </citation>
    <scope>GENOME REANNOTATION</scope>
    <source>
        <strain>Berkeley</strain>
    </source>
</reference>
<reference key="4">
    <citation type="journal article" date="2002" name="Genome Biol.">
        <title>A Drosophila full-length cDNA resource.</title>
        <authorList>
            <person name="Stapleton M."/>
            <person name="Carlson J.W."/>
            <person name="Brokstein P."/>
            <person name="Yu C."/>
            <person name="Champe M."/>
            <person name="George R.A."/>
            <person name="Guarin H."/>
            <person name="Kronmiller B."/>
            <person name="Pacleb J.M."/>
            <person name="Park S."/>
            <person name="Wan K.H."/>
            <person name="Rubin G.M."/>
            <person name="Celniker S.E."/>
        </authorList>
    </citation>
    <scope>NUCLEOTIDE SEQUENCE [LARGE SCALE MRNA]</scope>
    <source>
        <strain>Berkeley</strain>
        <tissue>Head</tissue>
    </source>
</reference>
<accession>P23779</accession>
<accession>Q8SZN3</accession>
<accession>Q9VFI2</accession>
<dbReference type="EMBL" id="X55178">
    <property type="protein sequence ID" value="CAA38963.1"/>
    <property type="status" value="ALT_INIT"/>
    <property type="molecule type" value="Genomic_DNA"/>
</dbReference>
<dbReference type="EMBL" id="AE014297">
    <property type="protein sequence ID" value="AAF55073.2"/>
    <property type="molecule type" value="Genomic_DNA"/>
</dbReference>
<dbReference type="EMBL" id="AY113633">
    <property type="protein sequence ID" value="AAM29638.1"/>
    <property type="molecule type" value="mRNA"/>
</dbReference>
<dbReference type="EMBL" id="AY070635">
    <property type="protein sequence ID" value="AAL48106.1"/>
    <property type="molecule type" value="mRNA"/>
</dbReference>
<dbReference type="PIR" id="S12913">
    <property type="entry name" value="S12913"/>
</dbReference>
<dbReference type="RefSeq" id="NP_476856.1">
    <property type="nucleotide sequence ID" value="NM_057508.4"/>
</dbReference>
<dbReference type="SMR" id="P23779"/>
<dbReference type="BioGRID" id="66842">
    <property type="interactions" value="27"/>
</dbReference>
<dbReference type="DIP" id="DIP-22398N"/>
<dbReference type="FunCoup" id="P23779">
    <property type="interactions" value="7"/>
</dbReference>
<dbReference type="IntAct" id="P23779">
    <property type="interactions" value="67"/>
</dbReference>
<dbReference type="STRING" id="7227.FBpp0082439"/>
<dbReference type="MEROPS" id="I25.013"/>
<dbReference type="PaxDb" id="7227-FBpp0082439"/>
<dbReference type="DNASU" id="41767"/>
<dbReference type="EnsemblMetazoa" id="FBtr0082980">
    <property type="protein sequence ID" value="FBpp0082439"/>
    <property type="gene ID" value="FBgn0004629"/>
</dbReference>
<dbReference type="GeneID" id="41767"/>
<dbReference type="KEGG" id="dme:Dmel_CG8050"/>
<dbReference type="AGR" id="FB:FBgn0004629"/>
<dbReference type="CTD" id="41767"/>
<dbReference type="FlyBase" id="FBgn0004629">
    <property type="gene designation" value="Cys"/>
</dbReference>
<dbReference type="VEuPathDB" id="VectorBase:FBgn0004629"/>
<dbReference type="eggNOG" id="ENOG502SC50">
    <property type="taxonomic scope" value="Eukaryota"/>
</dbReference>
<dbReference type="GeneTree" id="ENSGT00540000073849"/>
<dbReference type="HOGENOM" id="CLU_162219_0_0_1"/>
<dbReference type="InParanoid" id="P23779"/>
<dbReference type="OMA" id="NIQITCE"/>
<dbReference type="OrthoDB" id="6357437at2759"/>
<dbReference type="PhylomeDB" id="P23779"/>
<dbReference type="SignaLink" id="P23779"/>
<dbReference type="BioGRID-ORCS" id="41767">
    <property type="hits" value="0 hits in 1 CRISPR screen"/>
</dbReference>
<dbReference type="GenomeRNAi" id="41767"/>
<dbReference type="PRO" id="PR:P23779"/>
<dbReference type="Proteomes" id="UP000000803">
    <property type="component" value="Chromosome 3R"/>
</dbReference>
<dbReference type="Bgee" id="FBgn0004629">
    <property type="expression patterns" value="Expressed in crop (Drosophila) and 242 other cell types or tissues"/>
</dbReference>
<dbReference type="GO" id="GO:0005615">
    <property type="term" value="C:extracellular space"/>
    <property type="evidence" value="ECO:0007005"/>
    <property type="project" value="FlyBase"/>
</dbReference>
<dbReference type="GO" id="GO:0004869">
    <property type="term" value="F:cysteine-type endopeptidase inhibitor activity"/>
    <property type="evidence" value="ECO:0007669"/>
    <property type="project" value="UniProtKB-KW"/>
</dbReference>
<dbReference type="GO" id="GO:0019953">
    <property type="term" value="P:sexual reproduction"/>
    <property type="evidence" value="ECO:0007007"/>
    <property type="project" value="FlyBase"/>
</dbReference>
<dbReference type="CDD" id="cd00042">
    <property type="entry name" value="CY"/>
    <property type="match status" value="1"/>
</dbReference>
<dbReference type="Gene3D" id="3.10.450.10">
    <property type="match status" value="1"/>
</dbReference>
<dbReference type="InterPro" id="IPR053128">
    <property type="entry name" value="Cystatin-like"/>
</dbReference>
<dbReference type="InterPro" id="IPR000010">
    <property type="entry name" value="Cystatin_dom"/>
</dbReference>
<dbReference type="InterPro" id="IPR046350">
    <property type="entry name" value="Cystatin_sf"/>
</dbReference>
<dbReference type="InterPro" id="IPR018073">
    <property type="entry name" value="Prot_inh_cystat_CS"/>
</dbReference>
<dbReference type="PANTHER" id="PTHR12319:SF2">
    <property type="entry name" value="CYSTATIN-LIKE PROTEIN-RELATED"/>
    <property type="match status" value="1"/>
</dbReference>
<dbReference type="PANTHER" id="PTHR12319">
    <property type="entry name" value="CYSTATIN-RELATED"/>
    <property type="match status" value="1"/>
</dbReference>
<dbReference type="Pfam" id="PF00031">
    <property type="entry name" value="Cystatin"/>
    <property type="match status" value="1"/>
</dbReference>
<dbReference type="SMART" id="SM00043">
    <property type="entry name" value="CY"/>
    <property type="match status" value="1"/>
</dbReference>
<dbReference type="SUPFAM" id="SSF54403">
    <property type="entry name" value="Cystatin/monellin"/>
    <property type="match status" value="1"/>
</dbReference>
<dbReference type="PROSITE" id="PS00287">
    <property type="entry name" value="CYSTATIN"/>
    <property type="match status" value="1"/>
</dbReference>
<evidence type="ECO:0000250" key="1"/>
<evidence type="ECO:0000305" key="2"/>
<name>CYTL_DROME</name>
<keyword id="KW-1015">Disulfide bond</keyword>
<keyword id="KW-0646">Protease inhibitor</keyword>
<keyword id="KW-1185">Reference proteome</keyword>
<keyword id="KW-0789">Thiol protease inhibitor</keyword>
<protein>
    <recommendedName>
        <fullName>Cystatin-like protein</fullName>
    </recommendedName>
</protein>
<gene>
    <name type="primary">Cys</name>
    <name type="ORF">CG8050</name>
</gene>
<comment type="similarity">
    <text evidence="2">Belongs to the cystatin family.</text>
</comment>
<comment type="sequence caution" evidence="2">
    <conflict type="erroneous initiation">
        <sequence resource="EMBL-CDS" id="CAA38963"/>
    </conflict>
    <text>Extended N-terminus.</text>
</comment>
<proteinExistence type="evidence at transcript level"/>
<sequence length="126" mass="13437">MNVVKSLCILGLVLVSLIATQAADEQVVGGVSQLEGNSRKEALELLDATLAQLATGDGPSYKAINVTSVTGQVVAGSLNTYEVELDNGSDKKQCTVKIWTQPWLKENGTNIKIKCSGDDGELDRTW</sequence>
<organism>
    <name type="scientific">Drosophila melanogaster</name>
    <name type="common">Fruit fly</name>
    <dbReference type="NCBI Taxonomy" id="7227"/>
    <lineage>
        <taxon>Eukaryota</taxon>
        <taxon>Metazoa</taxon>
        <taxon>Ecdysozoa</taxon>
        <taxon>Arthropoda</taxon>
        <taxon>Hexapoda</taxon>
        <taxon>Insecta</taxon>
        <taxon>Pterygota</taxon>
        <taxon>Neoptera</taxon>
        <taxon>Endopterygota</taxon>
        <taxon>Diptera</taxon>
        <taxon>Brachycera</taxon>
        <taxon>Muscomorpha</taxon>
        <taxon>Ephydroidea</taxon>
        <taxon>Drosophilidae</taxon>
        <taxon>Drosophila</taxon>
        <taxon>Sophophora</taxon>
    </lineage>
</organism>